<evidence type="ECO:0000255" key="1"/>
<evidence type="ECO:0000269" key="2">
    <source>
    </source>
</evidence>
<evidence type="ECO:0000305" key="3"/>
<gene>
    <name type="primary">glcU</name>
    <name type="synonym">ycxE</name>
    <name type="ordered locus">BSU03920</name>
</gene>
<keyword id="KW-1003">Cell membrane</keyword>
<keyword id="KW-0472">Membrane</keyword>
<keyword id="KW-1185">Reference proteome</keyword>
<keyword id="KW-0749">Sporulation</keyword>
<keyword id="KW-0762">Sugar transport</keyword>
<keyword id="KW-0812">Transmembrane</keyword>
<keyword id="KW-1133">Transmembrane helix</keyword>
<keyword id="KW-0813">Transport</keyword>
<comment type="function">
    <text evidence="2">Involved in the uptake of glucose.</text>
</comment>
<comment type="subcellular location">
    <subcellularLocation>
        <location evidence="3">Cell membrane</location>
        <topology evidence="3">Multi-pass membrane protein</topology>
    </subcellularLocation>
</comment>
<comment type="developmental stage">
    <text>Expressed during sporulation.</text>
</comment>
<comment type="similarity">
    <text evidence="3">Belongs to the GRP transporter (TC 2.A.7.5) family.</text>
</comment>
<reference key="1">
    <citation type="journal article" date="1996" name="Microbiology">
        <title>The 25 degrees-36 degrees region of the Bacillus subtilis chromosome: determination of the sequence of a 146 kb segment and identification of 113 genes.</title>
        <authorList>
            <person name="Yamane K."/>
            <person name="Kumano M."/>
            <person name="Kurita K."/>
        </authorList>
    </citation>
    <scope>NUCLEOTIDE SEQUENCE [GENOMIC DNA]</scope>
    <source>
        <strain>168</strain>
    </source>
</reference>
<reference key="2">
    <citation type="journal article" date="1997" name="Nature">
        <title>The complete genome sequence of the Gram-positive bacterium Bacillus subtilis.</title>
        <authorList>
            <person name="Kunst F."/>
            <person name="Ogasawara N."/>
            <person name="Moszer I."/>
            <person name="Albertini A.M."/>
            <person name="Alloni G."/>
            <person name="Azevedo V."/>
            <person name="Bertero M.G."/>
            <person name="Bessieres P."/>
            <person name="Bolotin A."/>
            <person name="Borchert S."/>
            <person name="Borriss R."/>
            <person name="Boursier L."/>
            <person name="Brans A."/>
            <person name="Braun M."/>
            <person name="Brignell S.C."/>
            <person name="Bron S."/>
            <person name="Brouillet S."/>
            <person name="Bruschi C.V."/>
            <person name="Caldwell B."/>
            <person name="Capuano V."/>
            <person name="Carter N.M."/>
            <person name="Choi S.-K."/>
            <person name="Codani J.-J."/>
            <person name="Connerton I.F."/>
            <person name="Cummings N.J."/>
            <person name="Daniel R.A."/>
            <person name="Denizot F."/>
            <person name="Devine K.M."/>
            <person name="Duesterhoeft A."/>
            <person name="Ehrlich S.D."/>
            <person name="Emmerson P.T."/>
            <person name="Entian K.-D."/>
            <person name="Errington J."/>
            <person name="Fabret C."/>
            <person name="Ferrari E."/>
            <person name="Foulger D."/>
            <person name="Fritz C."/>
            <person name="Fujita M."/>
            <person name="Fujita Y."/>
            <person name="Fuma S."/>
            <person name="Galizzi A."/>
            <person name="Galleron N."/>
            <person name="Ghim S.-Y."/>
            <person name="Glaser P."/>
            <person name="Goffeau A."/>
            <person name="Golightly E.J."/>
            <person name="Grandi G."/>
            <person name="Guiseppi G."/>
            <person name="Guy B.J."/>
            <person name="Haga K."/>
            <person name="Haiech J."/>
            <person name="Harwood C.R."/>
            <person name="Henaut A."/>
            <person name="Hilbert H."/>
            <person name="Holsappel S."/>
            <person name="Hosono S."/>
            <person name="Hullo M.-F."/>
            <person name="Itaya M."/>
            <person name="Jones L.-M."/>
            <person name="Joris B."/>
            <person name="Karamata D."/>
            <person name="Kasahara Y."/>
            <person name="Klaerr-Blanchard M."/>
            <person name="Klein C."/>
            <person name="Kobayashi Y."/>
            <person name="Koetter P."/>
            <person name="Koningstein G."/>
            <person name="Krogh S."/>
            <person name="Kumano M."/>
            <person name="Kurita K."/>
            <person name="Lapidus A."/>
            <person name="Lardinois S."/>
            <person name="Lauber J."/>
            <person name="Lazarevic V."/>
            <person name="Lee S.-M."/>
            <person name="Levine A."/>
            <person name="Liu H."/>
            <person name="Masuda S."/>
            <person name="Mauel C."/>
            <person name="Medigue C."/>
            <person name="Medina N."/>
            <person name="Mellado R.P."/>
            <person name="Mizuno M."/>
            <person name="Moestl D."/>
            <person name="Nakai S."/>
            <person name="Noback M."/>
            <person name="Noone D."/>
            <person name="O'Reilly M."/>
            <person name="Ogawa K."/>
            <person name="Ogiwara A."/>
            <person name="Oudega B."/>
            <person name="Park S.-H."/>
            <person name="Parro V."/>
            <person name="Pohl T.M."/>
            <person name="Portetelle D."/>
            <person name="Porwollik S."/>
            <person name="Prescott A.M."/>
            <person name="Presecan E."/>
            <person name="Pujic P."/>
            <person name="Purnelle B."/>
            <person name="Rapoport G."/>
            <person name="Rey M."/>
            <person name="Reynolds S."/>
            <person name="Rieger M."/>
            <person name="Rivolta C."/>
            <person name="Rocha E."/>
            <person name="Roche B."/>
            <person name="Rose M."/>
            <person name="Sadaie Y."/>
            <person name="Sato T."/>
            <person name="Scanlan E."/>
            <person name="Schleich S."/>
            <person name="Schroeter R."/>
            <person name="Scoffone F."/>
            <person name="Sekiguchi J."/>
            <person name="Sekowska A."/>
            <person name="Seror S.J."/>
            <person name="Serror P."/>
            <person name="Shin B.-S."/>
            <person name="Soldo B."/>
            <person name="Sorokin A."/>
            <person name="Tacconi E."/>
            <person name="Takagi T."/>
            <person name="Takahashi H."/>
            <person name="Takemaru K."/>
            <person name="Takeuchi M."/>
            <person name="Tamakoshi A."/>
            <person name="Tanaka T."/>
            <person name="Terpstra P."/>
            <person name="Tognoni A."/>
            <person name="Tosato V."/>
            <person name="Uchiyama S."/>
            <person name="Vandenbol M."/>
            <person name="Vannier F."/>
            <person name="Vassarotti A."/>
            <person name="Viari A."/>
            <person name="Wambutt R."/>
            <person name="Wedler E."/>
            <person name="Wedler H."/>
            <person name="Weitzenegger T."/>
            <person name="Winters P."/>
            <person name="Wipat A."/>
            <person name="Yamamoto H."/>
            <person name="Yamane K."/>
            <person name="Yasumoto K."/>
            <person name="Yata K."/>
            <person name="Yoshida K."/>
            <person name="Yoshikawa H.-F."/>
            <person name="Zumstein E."/>
            <person name="Yoshikawa H."/>
            <person name="Danchin A."/>
        </authorList>
    </citation>
    <scope>NUCLEOTIDE SEQUENCE [LARGE SCALE GENOMIC DNA]</scope>
    <source>
        <strain>168</strain>
    </source>
</reference>
<reference key="3">
    <citation type="journal article" date="1988" name="J. Bacteriol.">
        <title>Compartment-specific transcription in Bacillus subtilis: identification of the promoter for gdh.</title>
        <authorList>
            <person name="Rather P.N."/>
            <person name="Moran C.P. Jr."/>
        </authorList>
    </citation>
    <scope>NUCLEOTIDE SEQUENCE [GENOMIC DNA] OF 1-9</scope>
</reference>
<reference key="4">
    <citation type="journal article" date="1986" name="J. Bacteriol.">
        <title>Characterization of the developmentally regulated Bacillus subtilis glucose dehydrogenase gene.</title>
        <authorList>
            <person name="Lampel K.A."/>
            <person name="Uratani B."/>
            <person name="Chaudhry G.R."/>
            <person name="Ramaley R.F."/>
            <person name="Rudikoff S."/>
        </authorList>
    </citation>
    <scope>NUCLEOTIDE SEQUENCE [GENOMIC DNA] OF 272-287</scope>
</reference>
<reference key="5">
    <citation type="journal article" date="1999" name="J. Bacteriol.">
        <title>Identification of a gene in Staphylococcus xylosus encoding a novel glucose uptake protein.</title>
        <authorList>
            <person name="Fiegler H."/>
            <person name="Bassias J."/>
            <person name="Jankovic I."/>
            <person name="Brueckner R."/>
        </authorList>
    </citation>
    <scope>FUNCTION</scope>
</reference>
<organism>
    <name type="scientific">Bacillus subtilis (strain 168)</name>
    <dbReference type="NCBI Taxonomy" id="224308"/>
    <lineage>
        <taxon>Bacteria</taxon>
        <taxon>Bacillati</taxon>
        <taxon>Bacillota</taxon>
        <taxon>Bacilli</taxon>
        <taxon>Bacillales</taxon>
        <taxon>Bacillaceae</taxon>
        <taxon>Bacillus</taxon>
    </lineage>
</organism>
<name>GLCU_BACSU</name>
<sequence>MDLLLALLPALFWGSIVLFNVKLGGGPYSQTLGTTIGALIVSIVIYFFVQPVLSLRIFIVGIVSGLFWSLGQANQLKSIQLMGVSKTMPISTGMQLVSTSLFGVIVFREWSTPIAITLGVLALIFIIVGIILTSLEDKNDKKEGEPSNLKKGILILLVSTLGYLVYVVVARLFNVSGWSALLPQAIGMVVGGLVLTYRHKPFNKYAIRNILPGLIWAGGNMFLFISQPRVGVATSFSLSQMGIVISTLGGIFILREKKTKRQLIAIAIGIILIIAAAVFLGIAKTNS</sequence>
<dbReference type="EMBL" id="D50453">
    <property type="protein sequence ID" value="BAA09023.1"/>
    <property type="molecule type" value="Genomic_DNA"/>
</dbReference>
<dbReference type="EMBL" id="AL009126">
    <property type="protein sequence ID" value="CAB12200.1"/>
    <property type="molecule type" value="Genomic_DNA"/>
</dbReference>
<dbReference type="EMBL" id="M23547">
    <property type="status" value="NOT_ANNOTATED_CDS"/>
    <property type="molecule type" value="Genomic_DNA"/>
</dbReference>
<dbReference type="EMBL" id="M12276">
    <property type="status" value="NOT_ANNOTATED_CDS"/>
    <property type="molecule type" value="Genomic_DNA"/>
</dbReference>
<dbReference type="PIR" id="G69766">
    <property type="entry name" value="G69766"/>
</dbReference>
<dbReference type="RefSeq" id="NP_388274.1">
    <property type="nucleotide sequence ID" value="NC_000964.3"/>
</dbReference>
<dbReference type="RefSeq" id="WP_003234455.1">
    <property type="nucleotide sequence ID" value="NZ_OZ025638.1"/>
</dbReference>
<dbReference type="SMR" id="P40420"/>
<dbReference type="FunCoup" id="P40420">
    <property type="interactions" value="24"/>
</dbReference>
<dbReference type="STRING" id="224308.BSU03920"/>
<dbReference type="TCDB" id="2.A.7.5.4">
    <property type="family name" value="the drug/metabolite transporter (dmt) superfamily"/>
</dbReference>
<dbReference type="PaxDb" id="224308-BSU03920"/>
<dbReference type="EnsemblBacteria" id="CAB12200">
    <property type="protein sequence ID" value="CAB12200"/>
    <property type="gene ID" value="BSU_03920"/>
</dbReference>
<dbReference type="GeneID" id="938268"/>
<dbReference type="KEGG" id="bsu:BSU03920"/>
<dbReference type="PATRIC" id="fig|224308.179.peg.415"/>
<dbReference type="eggNOG" id="COG4975">
    <property type="taxonomic scope" value="Bacteria"/>
</dbReference>
<dbReference type="InParanoid" id="P40420"/>
<dbReference type="OrthoDB" id="1452595at2"/>
<dbReference type="PhylomeDB" id="P40420"/>
<dbReference type="BioCyc" id="BSUB:BSU03920-MONOMER"/>
<dbReference type="Proteomes" id="UP000001570">
    <property type="component" value="Chromosome"/>
</dbReference>
<dbReference type="GO" id="GO:0005886">
    <property type="term" value="C:plasma membrane"/>
    <property type="evidence" value="ECO:0007669"/>
    <property type="project" value="UniProtKB-SubCell"/>
</dbReference>
<dbReference type="GO" id="GO:0015144">
    <property type="term" value="F:carbohydrate transmembrane transporter activity"/>
    <property type="evidence" value="ECO:0007669"/>
    <property type="project" value="InterPro"/>
</dbReference>
<dbReference type="GO" id="GO:0030435">
    <property type="term" value="P:sporulation resulting in formation of a cellular spore"/>
    <property type="evidence" value="ECO:0007669"/>
    <property type="project" value="UniProtKB-KW"/>
</dbReference>
<dbReference type="CDD" id="cd23112">
    <property type="entry name" value="glucose_uptake_GlcU"/>
    <property type="match status" value="1"/>
</dbReference>
<dbReference type="InterPro" id="IPR010651">
    <property type="entry name" value="Sugar_transport"/>
</dbReference>
<dbReference type="NCBIfam" id="TIGR00776">
    <property type="entry name" value="RhaT"/>
    <property type="match status" value="1"/>
</dbReference>
<dbReference type="PANTHER" id="PTHR16119">
    <property type="entry name" value="TRANSMEMBRANE PROTEIN 144"/>
    <property type="match status" value="1"/>
</dbReference>
<dbReference type="PANTHER" id="PTHR16119:SF17">
    <property type="entry name" value="TRANSMEMBRANE PROTEIN 144"/>
    <property type="match status" value="1"/>
</dbReference>
<dbReference type="Pfam" id="PF06800">
    <property type="entry name" value="Sugar_transport"/>
    <property type="match status" value="1"/>
</dbReference>
<dbReference type="SUPFAM" id="SSF103481">
    <property type="entry name" value="Multidrug resistance efflux transporter EmrE"/>
    <property type="match status" value="2"/>
</dbReference>
<proteinExistence type="evidence at transcript level"/>
<accession>P40420</accession>
<accession>P94429</accession>
<feature type="chain" id="PRO_0000213623" description="Glucose uptake protein GlcU">
    <location>
        <begin position="1"/>
        <end position="287"/>
    </location>
</feature>
<feature type="transmembrane region" description="Helical" evidence="1">
    <location>
        <begin position="4"/>
        <end position="26"/>
    </location>
</feature>
<feature type="transmembrane region" description="Helical" evidence="1">
    <location>
        <begin position="38"/>
        <end position="60"/>
    </location>
</feature>
<feature type="transmembrane region" description="Helical" evidence="1">
    <location>
        <begin position="110"/>
        <end position="132"/>
    </location>
</feature>
<feature type="transmembrane region" description="Helical" evidence="1">
    <location>
        <begin position="153"/>
        <end position="175"/>
    </location>
</feature>
<feature type="transmembrane region" description="Helical" evidence="1">
    <location>
        <begin position="180"/>
        <end position="197"/>
    </location>
</feature>
<feature type="transmembrane region" description="Helical" evidence="1">
    <location>
        <begin position="210"/>
        <end position="227"/>
    </location>
</feature>
<feature type="transmembrane region" description="Helical" evidence="1">
    <location>
        <begin position="232"/>
        <end position="254"/>
    </location>
</feature>
<feature type="transmembrane region" description="Helical" evidence="1">
    <location>
        <begin position="261"/>
        <end position="283"/>
    </location>
</feature>
<protein>
    <recommendedName>
        <fullName>Glucose uptake protein GlcU</fullName>
    </recommendedName>
</protein>